<accession>D7STK2</accession>
<reference key="1">
    <citation type="journal article" date="2007" name="Nature">
        <title>The grapevine genome sequence suggests ancestral hexaploidization in major angiosperm phyla.</title>
        <authorList>
            <person name="Jaillon O."/>
            <person name="Aury J.-M."/>
            <person name="Noel B."/>
            <person name="Policriti A."/>
            <person name="Clepet C."/>
            <person name="Casagrande A."/>
            <person name="Choisne N."/>
            <person name="Aubourg S."/>
            <person name="Vitulo N."/>
            <person name="Jubin C."/>
            <person name="Vezzi A."/>
            <person name="Legeai F."/>
            <person name="Hugueney P."/>
            <person name="Dasilva C."/>
            <person name="Horner D."/>
            <person name="Mica E."/>
            <person name="Jublot D."/>
            <person name="Poulain J."/>
            <person name="Bruyere C."/>
            <person name="Billault A."/>
            <person name="Segurens B."/>
            <person name="Gouyvenoux M."/>
            <person name="Ugarte E."/>
            <person name="Cattonaro F."/>
            <person name="Anthouard V."/>
            <person name="Vico V."/>
            <person name="Del Fabbro C."/>
            <person name="Alaux M."/>
            <person name="Di Gaspero G."/>
            <person name="Dumas V."/>
            <person name="Felice N."/>
            <person name="Paillard S."/>
            <person name="Juman I."/>
            <person name="Moroldo M."/>
            <person name="Scalabrin S."/>
            <person name="Canaguier A."/>
            <person name="Le Clainche I."/>
            <person name="Malacrida G."/>
            <person name="Durand E."/>
            <person name="Pesole G."/>
            <person name="Laucou V."/>
            <person name="Chatelet P."/>
            <person name="Merdinoglu D."/>
            <person name="Delledonne M."/>
            <person name="Pezzotti M."/>
            <person name="Lecharny A."/>
            <person name="Scarpelli C."/>
            <person name="Artiguenave F."/>
            <person name="Pe M.E."/>
            <person name="Valle G."/>
            <person name="Morgante M."/>
            <person name="Caboche M."/>
            <person name="Adam-Blondon A.-F."/>
            <person name="Weissenbach J."/>
            <person name="Quetier F."/>
            <person name="Wincker P."/>
        </authorList>
    </citation>
    <scope>NUCLEOTIDE SEQUENCE [LARGE SCALE GENOMIC DNA]</scope>
    <source>
        <strain>cv. Pinot noir / PN40024</strain>
    </source>
</reference>
<name>GATC_VITVI</name>
<keyword id="KW-0067">ATP-binding</keyword>
<keyword id="KW-0150">Chloroplast</keyword>
<keyword id="KW-0436">Ligase</keyword>
<keyword id="KW-0496">Mitochondrion</keyword>
<keyword id="KW-0547">Nucleotide-binding</keyword>
<keyword id="KW-0934">Plastid</keyword>
<keyword id="KW-0648">Protein biosynthesis</keyword>
<keyword id="KW-1185">Reference proteome</keyword>
<feature type="chain" id="PRO_0000413324" description="Glutamyl-tRNA(Gln) amidotransferase subunit C, chloroplastic/mitochondrial">
    <location>
        <begin position="1"/>
        <end position="137"/>
    </location>
</feature>
<evidence type="ECO:0000255" key="1">
    <source>
        <dbReference type="HAMAP-Rule" id="MF_03149"/>
    </source>
</evidence>
<organism>
    <name type="scientific">Vitis vinifera</name>
    <name type="common">Grape</name>
    <dbReference type="NCBI Taxonomy" id="29760"/>
    <lineage>
        <taxon>Eukaryota</taxon>
        <taxon>Viridiplantae</taxon>
        <taxon>Streptophyta</taxon>
        <taxon>Embryophyta</taxon>
        <taxon>Tracheophyta</taxon>
        <taxon>Spermatophyta</taxon>
        <taxon>Magnoliopsida</taxon>
        <taxon>eudicotyledons</taxon>
        <taxon>Gunneridae</taxon>
        <taxon>Pentapetalae</taxon>
        <taxon>rosids</taxon>
        <taxon>Vitales</taxon>
        <taxon>Vitaceae</taxon>
        <taxon>Viteae</taxon>
        <taxon>Vitis</taxon>
    </lineage>
</organism>
<comment type="function">
    <text evidence="1">Allows the formation of correctly charged Gln-tRNA(Gln) through the transamidation of misacylated Glu-tRNA(Gln) in chloroplasts and mitochondria. The reaction takes place in the presence of glutamine and ATP through an activated gamma-phospho-Glu-tRNA(Gln).</text>
</comment>
<comment type="catalytic activity">
    <reaction evidence="1">
        <text>L-glutamyl-tRNA(Gln) + L-glutamine + ATP + H2O = L-glutaminyl-tRNA(Gln) + L-glutamate + ADP + phosphate + H(+)</text>
        <dbReference type="Rhea" id="RHEA:17521"/>
        <dbReference type="Rhea" id="RHEA-COMP:9681"/>
        <dbReference type="Rhea" id="RHEA-COMP:9684"/>
        <dbReference type="ChEBI" id="CHEBI:15377"/>
        <dbReference type="ChEBI" id="CHEBI:15378"/>
        <dbReference type="ChEBI" id="CHEBI:29985"/>
        <dbReference type="ChEBI" id="CHEBI:30616"/>
        <dbReference type="ChEBI" id="CHEBI:43474"/>
        <dbReference type="ChEBI" id="CHEBI:58359"/>
        <dbReference type="ChEBI" id="CHEBI:78520"/>
        <dbReference type="ChEBI" id="CHEBI:78521"/>
        <dbReference type="ChEBI" id="CHEBI:456216"/>
    </reaction>
</comment>
<comment type="subunit">
    <text evidence="1">Subunit of the heterotrimeric GatCAB amidotransferase (AdT) complex, composed of A, B and C subunits.</text>
</comment>
<comment type="subcellular location">
    <subcellularLocation>
        <location evidence="1">Mitochondrion</location>
    </subcellularLocation>
    <subcellularLocation>
        <location evidence="1">Plastid</location>
        <location evidence="1">Chloroplast</location>
    </subcellularLocation>
</comment>
<comment type="miscellaneous">
    <text evidence="1">This protein may be expected to contain an N-terminal transit peptide but none has been predicted.</text>
</comment>
<comment type="similarity">
    <text evidence="1">Belongs to the GatC family.</text>
</comment>
<protein>
    <recommendedName>
        <fullName evidence="1">Glutamyl-tRNA(Gln) amidotransferase subunit C, chloroplastic/mitochondrial</fullName>
        <shortName evidence="1">Glu-AdT subunit C</shortName>
        <ecNumber evidence="1">6.3.5.-</ecNumber>
    </recommendedName>
</protein>
<sequence length="137" mass="15328">MGSRALLLLKATTAETLLFTSKSTFSKALIRNSTRSFSTRSALLPPDLPRLAETARISLTPHEVEEFAPKIRQVIDWFGQLQAVDLQSIEPSIRADTEGDNLRDDSPETFENREAIIAAIPSYEEPYLKVPKVLNKD</sequence>
<gene>
    <name evidence="1" type="primary">GATC</name>
    <name type="ordered locus">VIT_04s0008g00570</name>
</gene>
<dbReference type="EC" id="6.3.5.-" evidence="1"/>
<dbReference type="EMBL" id="FN597020">
    <property type="protein sequence ID" value="CBI20601.3"/>
    <property type="molecule type" value="Genomic_DNA"/>
</dbReference>
<dbReference type="RefSeq" id="XP_002275650.1">
    <property type="nucleotide sequence ID" value="XM_002275614.3"/>
</dbReference>
<dbReference type="SMR" id="D7STK2"/>
<dbReference type="FunCoup" id="D7STK2">
    <property type="interactions" value="615"/>
</dbReference>
<dbReference type="STRING" id="29760.D7STK2"/>
<dbReference type="PaxDb" id="29760-VIT_04s0008g00570.t01"/>
<dbReference type="EnsemblPlants" id="Vitvi04g01777_t001">
    <property type="protein sequence ID" value="Vitvi04g01777_P001"/>
    <property type="gene ID" value="Vitvi04g01777"/>
</dbReference>
<dbReference type="Gramene" id="Vitvi04g01777_t001">
    <property type="protein sequence ID" value="Vitvi04g01777_P001"/>
    <property type="gene ID" value="Vitvi04g01777"/>
</dbReference>
<dbReference type="eggNOG" id="KOG2271">
    <property type="taxonomic scope" value="Eukaryota"/>
</dbReference>
<dbReference type="HOGENOM" id="CLU_105899_5_0_1"/>
<dbReference type="InParanoid" id="D7STK2"/>
<dbReference type="OMA" id="KPTRTAN"/>
<dbReference type="OrthoDB" id="2020502at2759"/>
<dbReference type="Proteomes" id="UP000009183">
    <property type="component" value="Chromosome 4"/>
</dbReference>
<dbReference type="GO" id="GO:0009507">
    <property type="term" value="C:chloroplast"/>
    <property type="evidence" value="ECO:0007669"/>
    <property type="project" value="UniProtKB-SubCell"/>
</dbReference>
<dbReference type="GO" id="GO:0030956">
    <property type="term" value="C:glutamyl-tRNA(Gln) amidotransferase complex"/>
    <property type="evidence" value="ECO:0000318"/>
    <property type="project" value="GO_Central"/>
</dbReference>
<dbReference type="GO" id="GO:0005739">
    <property type="term" value="C:mitochondrion"/>
    <property type="evidence" value="ECO:0000318"/>
    <property type="project" value="GO_Central"/>
</dbReference>
<dbReference type="GO" id="GO:0005524">
    <property type="term" value="F:ATP binding"/>
    <property type="evidence" value="ECO:0007669"/>
    <property type="project" value="UniProtKB-KW"/>
</dbReference>
<dbReference type="GO" id="GO:0050567">
    <property type="term" value="F:glutaminyl-tRNA synthase (glutamine-hydrolyzing) activity"/>
    <property type="evidence" value="ECO:0007669"/>
    <property type="project" value="UniProtKB-UniRule"/>
</dbReference>
<dbReference type="GO" id="GO:0070681">
    <property type="term" value="P:glutaminyl-tRNAGln biosynthesis via transamidation"/>
    <property type="evidence" value="ECO:0000318"/>
    <property type="project" value="GO_Central"/>
</dbReference>
<dbReference type="GO" id="GO:0032543">
    <property type="term" value="P:mitochondrial translation"/>
    <property type="evidence" value="ECO:0000318"/>
    <property type="project" value="GO_Central"/>
</dbReference>
<dbReference type="GO" id="GO:0006450">
    <property type="term" value="P:regulation of translational fidelity"/>
    <property type="evidence" value="ECO:0007669"/>
    <property type="project" value="InterPro"/>
</dbReference>
<dbReference type="Gene3D" id="1.10.20.60">
    <property type="entry name" value="Glu-tRNAGln amidotransferase C subunit, N-terminal domain"/>
    <property type="match status" value="1"/>
</dbReference>
<dbReference type="HAMAP" id="MF_00122">
    <property type="entry name" value="GatC"/>
    <property type="match status" value="1"/>
</dbReference>
<dbReference type="InterPro" id="IPR036113">
    <property type="entry name" value="Asp/Glu-ADT_sf_sub_c"/>
</dbReference>
<dbReference type="InterPro" id="IPR003837">
    <property type="entry name" value="GatC"/>
</dbReference>
<dbReference type="NCBIfam" id="TIGR00135">
    <property type="entry name" value="gatC"/>
    <property type="match status" value="1"/>
</dbReference>
<dbReference type="PANTHER" id="PTHR15004">
    <property type="entry name" value="GLUTAMYL-TRNA(GLN) AMIDOTRANSFERASE SUBUNIT C, MITOCHONDRIAL"/>
    <property type="match status" value="1"/>
</dbReference>
<dbReference type="PANTHER" id="PTHR15004:SF0">
    <property type="entry name" value="GLUTAMYL-TRNA(GLN) AMIDOTRANSFERASE SUBUNIT C, MITOCHONDRIAL"/>
    <property type="match status" value="1"/>
</dbReference>
<dbReference type="Pfam" id="PF02686">
    <property type="entry name" value="GatC"/>
    <property type="match status" value="1"/>
</dbReference>
<dbReference type="SUPFAM" id="SSF141000">
    <property type="entry name" value="Glu-tRNAGln amidotransferase C subunit"/>
    <property type="match status" value="1"/>
</dbReference>
<proteinExistence type="inferred from homology"/>